<evidence type="ECO:0000255" key="1">
    <source>
        <dbReference type="HAMAP-Rule" id="MF_00159"/>
    </source>
</evidence>
<organism>
    <name type="scientific">Listeria monocytogenes serovar 1/2a (strain ATCC BAA-679 / EGD-e)</name>
    <dbReference type="NCBI Taxonomy" id="169963"/>
    <lineage>
        <taxon>Bacteria</taxon>
        <taxon>Bacillati</taxon>
        <taxon>Bacillota</taxon>
        <taxon>Bacilli</taxon>
        <taxon>Bacillales</taxon>
        <taxon>Listeriaceae</taxon>
        <taxon>Listeria</taxon>
    </lineage>
</organism>
<accession>P58668</accession>
<gene>
    <name evidence="1" type="primary">ispG</name>
    <name type="ordered locus">lmo1441</name>
</gene>
<proteinExistence type="inferred from homology"/>
<keyword id="KW-0004">4Fe-4S</keyword>
<keyword id="KW-0408">Iron</keyword>
<keyword id="KW-0411">Iron-sulfur</keyword>
<keyword id="KW-0414">Isoprene biosynthesis</keyword>
<keyword id="KW-0479">Metal-binding</keyword>
<keyword id="KW-0560">Oxidoreductase</keyword>
<keyword id="KW-1185">Reference proteome</keyword>
<comment type="function">
    <text evidence="1">Converts 2C-methyl-D-erythritol 2,4-cyclodiphosphate (ME-2,4cPP) into 1-hydroxy-2-methyl-2-(E)-butenyl 4-diphosphate.</text>
</comment>
<comment type="catalytic activity">
    <reaction evidence="1">
        <text>(2E)-4-hydroxy-3-methylbut-2-enyl diphosphate + oxidized [flavodoxin] + H2O + 2 H(+) = 2-C-methyl-D-erythritol 2,4-cyclic diphosphate + reduced [flavodoxin]</text>
        <dbReference type="Rhea" id="RHEA:43604"/>
        <dbReference type="Rhea" id="RHEA-COMP:10622"/>
        <dbReference type="Rhea" id="RHEA-COMP:10623"/>
        <dbReference type="ChEBI" id="CHEBI:15377"/>
        <dbReference type="ChEBI" id="CHEBI:15378"/>
        <dbReference type="ChEBI" id="CHEBI:57618"/>
        <dbReference type="ChEBI" id="CHEBI:58210"/>
        <dbReference type="ChEBI" id="CHEBI:58483"/>
        <dbReference type="ChEBI" id="CHEBI:128753"/>
        <dbReference type="EC" id="1.17.7.3"/>
    </reaction>
</comment>
<comment type="cofactor">
    <cofactor evidence="1">
        <name>[4Fe-4S] cluster</name>
        <dbReference type="ChEBI" id="CHEBI:49883"/>
    </cofactor>
    <text evidence="1">Binds 1 [4Fe-4S] cluster.</text>
</comment>
<comment type="pathway">
    <text evidence="1">Isoprenoid biosynthesis; isopentenyl diphosphate biosynthesis via DXP pathway; isopentenyl diphosphate from 1-deoxy-D-xylulose 5-phosphate: step 5/6.</text>
</comment>
<comment type="similarity">
    <text evidence="1">Belongs to the IspG family.</text>
</comment>
<name>ISPG_LISMO</name>
<reference key="1">
    <citation type="journal article" date="2001" name="Science">
        <title>Comparative genomics of Listeria species.</title>
        <authorList>
            <person name="Glaser P."/>
            <person name="Frangeul L."/>
            <person name="Buchrieser C."/>
            <person name="Rusniok C."/>
            <person name="Amend A."/>
            <person name="Baquero F."/>
            <person name="Berche P."/>
            <person name="Bloecker H."/>
            <person name="Brandt P."/>
            <person name="Chakraborty T."/>
            <person name="Charbit A."/>
            <person name="Chetouani F."/>
            <person name="Couve E."/>
            <person name="de Daruvar A."/>
            <person name="Dehoux P."/>
            <person name="Domann E."/>
            <person name="Dominguez-Bernal G."/>
            <person name="Duchaud E."/>
            <person name="Durant L."/>
            <person name="Dussurget O."/>
            <person name="Entian K.-D."/>
            <person name="Fsihi H."/>
            <person name="Garcia-del Portillo F."/>
            <person name="Garrido P."/>
            <person name="Gautier L."/>
            <person name="Goebel W."/>
            <person name="Gomez-Lopez N."/>
            <person name="Hain T."/>
            <person name="Hauf J."/>
            <person name="Jackson D."/>
            <person name="Jones L.-M."/>
            <person name="Kaerst U."/>
            <person name="Kreft J."/>
            <person name="Kuhn M."/>
            <person name="Kunst F."/>
            <person name="Kurapkat G."/>
            <person name="Madueno E."/>
            <person name="Maitournam A."/>
            <person name="Mata Vicente J."/>
            <person name="Ng E."/>
            <person name="Nedjari H."/>
            <person name="Nordsiek G."/>
            <person name="Novella S."/>
            <person name="de Pablos B."/>
            <person name="Perez-Diaz J.-C."/>
            <person name="Purcell R."/>
            <person name="Remmel B."/>
            <person name="Rose M."/>
            <person name="Schlueter T."/>
            <person name="Simoes N."/>
            <person name="Tierrez A."/>
            <person name="Vazquez-Boland J.-A."/>
            <person name="Voss H."/>
            <person name="Wehland J."/>
            <person name="Cossart P."/>
        </authorList>
    </citation>
    <scope>NUCLEOTIDE SEQUENCE [LARGE SCALE GENOMIC DNA]</scope>
    <source>
        <strain>ATCC BAA-679 / EGD-e</strain>
    </source>
</reference>
<dbReference type="EC" id="1.17.7.3" evidence="1"/>
<dbReference type="EMBL" id="AL591979">
    <property type="protein sequence ID" value="CAC99519.1"/>
    <property type="molecule type" value="Genomic_DNA"/>
</dbReference>
<dbReference type="PIR" id="AI1254">
    <property type="entry name" value="AI1254"/>
</dbReference>
<dbReference type="RefSeq" id="NP_464966.1">
    <property type="nucleotide sequence ID" value="NC_003210.1"/>
</dbReference>
<dbReference type="RefSeq" id="WP_003732336.1">
    <property type="nucleotide sequence ID" value="NZ_CP149495.1"/>
</dbReference>
<dbReference type="SMR" id="P58668"/>
<dbReference type="STRING" id="169963.gene:17594098"/>
<dbReference type="PaxDb" id="169963-lmo1441"/>
<dbReference type="EnsemblBacteria" id="CAC99519">
    <property type="protein sequence ID" value="CAC99519"/>
    <property type="gene ID" value="CAC99519"/>
</dbReference>
<dbReference type="GeneID" id="986437"/>
<dbReference type="KEGG" id="lmo:lmo1441"/>
<dbReference type="PATRIC" id="fig|169963.11.peg.1480"/>
<dbReference type="eggNOG" id="COG0821">
    <property type="taxonomic scope" value="Bacteria"/>
</dbReference>
<dbReference type="HOGENOM" id="CLU_042258_0_0_9"/>
<dbReference type="OrthoDB" id="9803214at2"/>
<dbReference type="PhylomeDB" id="P58668"/>
<dbReference type="BioCyc" id="LMON169963:LMO1441-MONOMER"/>
<dbReference type="UniPathway" id="UPA00056">
    <property type="reaction ID" value="UER00096"/>
</dbReference>
<dbReference type="Proteomes" id="UP000000817">
    <property type="component" value="Chromosome"/>
</dbReference>
<dbReference type="GO" id="GO:0051539">
    <property type="term" value="F:4 iron, 4 sulfur cluster binding"/>
    <property type="evidence" value="ECO:0007669"/>
    <property type="project" value="UniProtKB-UniRule"/>
</dbReference>
<dbReference type="GO" id="GO:0046429">
    <property type="term" value="F:4-hydroxy-3-methylbut-2-en-1-yl diphosphate synthase activity (ferredoxin)"/>
    <property type="evidence" value="ECO:0000318"/>
    <property type="project" value="GO_Central"/>
</dbReference>
<dbReference type="GO" id="GO:0141197">
    <property type="term" value="F:4-hydroxy-3-methylbut-2-enyl-diphosphate synthase activity (flavodoxin)"/>
    <property type="evidence" value="ECO:0007669"/>
    <property type="project" value="UniProtKB-EC"/>
</dbReference>
<dbReference type="GO" id="GO:0005506">
    <property type="term" value="F:iron ion binding"/>
    <property type="evidence" value="ECO:0007669"/>
    <property type="project" value="InterPro"/>
</dbReference>
<dbReference type="GO" id="GO:0019288">
    <property type="term" value="P:isopentenyl diphosphate biosynthetic process, methylerythritol 4-phosphate pathway"/>
    <property type="evidence" value="ECO:0000318"/>
    <property type="project" value="GO_Central"/>
</dbReference>
<dbReference type="GO" id="GO:0016114">
    <property type="term" value="P:terpenoid biosynthetic process"/>
    <property type="evidence" value="ECO:0007669"/>
    <property type="project" value="InterPro"/>
</dbReference>
<dbReference type="FunFam" id="3.20.20.20:FF:000001">
    <property type="entry name" value="4-hydroxy-3-methylbut-2-en-1-yl diphosphate synthase (flavodoxin)"/>
    <property type="match status" value="1"/>
</dbReference>
<dbReference type="FunFam" id="3.30.413.10:FF:000005">
    <property type="entry name" value="4-hydroxy-3-methylbut-2-en-1-yl diphosphate synthase (flavodoxin)"/>
    <property type="match status" value="1"/>
</dbReference>
<dbReference type="Gene3D" id="3.20.20.20">
    <property type="entry name" value="Dihydropteroate synthase-like"/>
    <property type="match status" value="1"/>
</dbReference>
<dbReference type="Gene3D" id="3.30.413.10">
    <property type="entry name" value="Sulfite Reductase Hemoprotein, domain 1"/>
    <property type="match status" value="1"/>
</dbReference>
<dbReference type="HAMAP" id="MF_00159">
    <property type="entry name" value="IspG"/>
    <property type="match status" value="1"/>
</dbReference>
<dbReference type="InterPro" id="IPR011005">
    <property type="entry name" value="Dihydropteroate_synth-like_sf"/>
</dbReference>
<dbReference type="InterPro" id="IPR016425">
    <property type="entry name" value="IspG_bac"/>
</dbReference>
<dbReference type="InterPro" id="IPR004588">
    <property type="entry name" value="IspG_bac-typ"/>
</dbReference>
<dbReference type="InterPro" id="IPR045854">
    <property type="entry name" value="NO2/SO3_Rdtase_4Fe4S_sf"/>
</dbReference>
<dbReference type="NCBIfam" id="TIGR00612">
    <property type="entry name" value="ispG_gcpE"/>
    <property type="match status" value="1"/>
</dbReference>
<dbReference type="NCBIfam" id="NF001540">
    <property type="entry name" value="PRK00366.1"/>
    <property type="match status" value="1"/>
</dbReference>
<dbReference type="PANTHER" id="PTHR30454">
    <property type="entry name" value="4-HYDROXY-3-METHYLBUT-2-EN-1-YL DIPHOSPHATE SYNTHASE"/>
    <property type="match status" value="1"/>
</dbReference>
<dbReference type="PANTHER" id="PTHR30454:SF0">
    <property type="entry name" value="4-HYDROXY-3-METHYLBUT-2-EN-1-YL DIPHOSPHATE SYNTHASE (FERREDOXIN), CHLOROPLASTIC"/>
    <property type="match status" value="1"/>
</dbReference>
<dbReference type="Pfam" id="PF04551">
    <property type="entry name" value="GcpE"/>
    <property type="match status" value="1"/>
</dbReference>
<dbReference type="PIRSF" id="PIRSF004640">
    <property type="entry name" value="IspG"/>
    <property type="match status" value="1"/>
</dbReference>
<dbReference type="SUPFAM" id="SSF51717">
    <property type="entry name" value="Dihydropteroate synthetase-like"/>
    <property type="match status" value="1"/>
</dbReference>
<dbReference type="SUPFAM" id="SSF56014">
    <property type="entry name" value="Nitrite and sulphite reductase 4Fe-4S domain-like"/>
    <property type="match status" value="1"/>
</dbReference>
<feature type="chain" id="PRO_0000190594" description="4-hydroxy-3-methylbut-2-en-1-yl diphosphate synthase (flavodoxin)">
    <location>
        <begin position="1"/>
        <end position="368"/>
    </location>
</feature>
<feature type="binding site" evidence="1">
    <location>
        <position position="268"/>
    </location>
    <ligand>
        <name>[4Fe-4S] cluster</name>
        <dbReference type="ChEBI" id="CHEBI:49883"/>
    </ligand>
</feature>
<feature type="binding site" evidence="1">
    <location>
        <position position="271"/>
    </location>
    <ligand>
        <name>[4Fe-4S] cluster</name>
        <dbReference type="ChEBI" id="CHEBI:49883"/>
    </ligand>
</feature>
<feature type="binding site" evidence="1">
    <location>
        <position position="303"/>
    </location>
    <ligand>
        <name>[4Fe-4S] cluster</name>
        <dbReference type="ChEBI" id="CHEBI:49883"/>
    </ligand>
</feature>
<feature type="binding site" evidence="1">
    <location>
        <position position="310"/>
    </location>
    <ligand>
        <name>[4Fe-4S] cluster</name>
        <dbReference type="ChEBI" id="CHEBI:49883"/>
    </ligand>
</feature>
<protein>
    <recommendedName>
        <fullName evidence="1">4-hydroxy-3-methylbut-2-en-1-yl diphosphate synthase (flavodoxin)</fullName>
        <ecNumber evidence="1">1.17.7.3</ecNumber>
    </recommendedName>
    <alternativeName>
        <fullName evidence="1">1-hydroxy-2-methyl-2-(E)-butenyl 4-diphosphate synthase</fullName>
    </alternativeName>
</protein>
<sequence>MNERIFRENTRPVQVGNLTIGGSEELTIQSMTTTKTHDVEATVAEIHRLEEAGCQIVRVACPDERAANALSAIKKKIHIPLVADIHFDYRLALKAIDAGVDKIRINPGNIGRRDRVEKVVNAAKAKNIPIRIGVNAGSLEKKIIQKYGYPTADGMVESALAHIKILEDLDFYDIIVSLKASDVNLAIEAYDKASRAFNYPLHLGITESGTQFAGGIKSAAGLGAILSLGIGNTLRVSLSADPVEEIKVAREVLKSFGLSSNAAMLISCPTCGRIEIDLIRIANEVENYIAKIEVPIKVAVLGCAVNGPGEAREADIGIAGSNGEGLLFRHGKIIRKVPEAIMIDELKKEIDILAEEFFVKKIDLESLR</sequence>